<sequence length="1199" mass="120785">MSPAAAAADGGERRRPPLGVREGRGRTRGCGGPAGAAALGLALLGLALYLVPAAAALAWLAVGASAAWWGLSREPRGPRGLSSFVRESRRHPRPALTASPLPAKSPVNGSLCEPRSPLGGPDPAELLLMGSYLGKPGPPEPALPQDPRDRPGRRPPSRSPPSSSTAQRVHHVYPALPTPLLRPSRRPPHRDCGPLSSRFVITPRRRYPIQQAQYSLLGALPTVCWNGGHKKAVLSARNSRMVCSPVTVRIAPPDSKLFRSPMPEQILSTTLSSPSSNAPDPCAKETVLNALKEKKKRTVAEEDQLHLDGQENKRRRHDSSGSGHSAFEPLVANGVPAAFVPKPGSLKRSLASQSSDDHLNKRSRTSSVSSLTSTCTGGIPSSSRNAITSSYSSTRGVSQLWKRSGPTSSPFSSPASSRSQTPERPAKKTREEEPCHQSSSSAPLVTDKESPGEKVTDPATGKQQSLWTSPPTPGSSGQRKRKIQLLPSRRGDQLTLPPPPELGYSITAEDLDMERRASLQWFNKVLEDKTDDASTPATDTSPATSPPFTLTLPTVGPAASPASLPAPSSNPLLESLKKMQESPAPSSSEPPEAATVAAPSPPKTPSLLAPLVSPLTGPLASTSSDSKPTTTFLGLASASSATPLTDTKAPGVSQAQLCVSTPAATAPSPTPASTLFGMLSPPASSSSLATPGPACASPMFKPIFPATPKSESDNPLPTSSSAATTTPASTALPTTATATAHTFKPIFESVEPFAAMPLSPPFSLKQTTAPATTAATSAPLLTGLGTATSTVATGTTASASKPVFGFGVTTAASTASTIASTSQSILFGGAPPVTASSSAPALASIFQFGKPLAPAASVAGTSFSQSLASSAQTAASNSSGGFSGFGGTLTTSTSAPATTSQPTLTFSNTVTPTFNIPFSASAKPALPTYPGANSQPTFGATDGATKPALAPSFGSSFTFGNSVASAPSAAPAPAAFGGAAQPAFGGLKASASTFGTPASTQPAFGSTTSVFSFGSATTSGFGAAAATTQTTHSGSSSSLFGSSTPSPFTFGGSAAPAGGGGFGLSATPGTGSTSGTFSFGSGQSGTTGTTTSFGGSLSQNTLGAPSQSSPFAFSVGSTPESKPVFGGTSTPTFGQSAPAPGVGTTGSSLSFGAPSTPAQGFVGVGPFGSGAPSFSIGAGSKTPGARQRLQARRQHTRKK</sequence>
<comment type="function">
    <text>Essential component of the nuclear pore complex (NPC). The repeat-containing domain may be involved in anchoring components of the pore complex to the pore membrane. When overexpressed in cells induces the formation of cytoplasmic annulate lamellae (AL).</text>
</comment>
<comment type="subcellular location">
    <subcellularLocation>
        <location evidence="6">Nucleus</location>
        <location evidence="6">Nuclear pore complex</location>
    </subcellularLocation>
    <subcellularLocation>
        <location evidence="6">Nucleus membrane</location>
        <topology evidence="6">Single-pass membrane protein</topology>
    </subcellularLocation>
    <subcellularLocation>
        <location evidence="6">Endoplasmic reticulum membrane</location>
        <topology evidence="6">Single-pass membrane protein</topology>
    </subcellularLocation>
    <text>Stably associated with the NPC throughout interphase and the endoplasmic reticulum during metaphase.</text>
</comment>
<comment type="domain">
    <text>Contains F-X-F-G repeats.</text>
</comment>
<comment type="PTM">
    <text>Proteolytically cleaved by caspase-3 during apoptosis.</text>
</comment>
<comment type="similarity">
    <text evidence="8">Belongs to the POM121 family.</text>
</comment>
<protein>
    <recommendedName>
        <fullName>Nuclear envelope pore membrane protein POM 121</fullName>
    </recommendedName>
    <alternativeName>
        <fullName>Nucleoporin Nup121</fullName>
    </alternativeName>
    <alternativeName>
        <fullName>Pore membrane protein of 121 kDa</fullName>
    </alternativeName>
    <alternativeName>
        <fullName>p145</fullName>
    </alternativeName>
</protein>
<organism>
    <name type="scientific">Rattus norvegicus</name>
    <name type="common">Rat</name>
    <dbReference type="NCBI Taxonomy" id="10116"/>
    <lineage>
        <taxon>Eukaryota</taxon>
        <taxon>Metazoa</taxon>
        <taxon>Chordata</taxon>
        <taxon>Craniata</taxon>
        <taxon>Vertebrata</taxon>
        <taxon>Euteleostomi</taxon>
        <taxon>Mammalia</taxon>
        <taxon>Eutheria</taxon>
        <taxon>Euarchontoglires</taxon>
        <taxon>Glires</taxon>
        <taxon>Rodentia</taxon>
        <taxon>Myomorpha</taxon>
        <taxon>Muroidea</taxon>
        <taxon>Muridae</taxon>
        <taxon>Murinae</taxon>
        <taxon>Rattus</taxon>
    </lineage>
</organism>
<gene>
    <name type="primary">Pom121</name>
    <name type="synonym">Nup121</name>
</gene>
<accession>P52591</accession>
<dbReference type="EMBL" id="Z21513">
    <property type="protein sequence ID" value="CAA79725.1"/>
    <property type="molecule type" value="mRNA"/>
</dbReference>
<dbReference type="EMBL" id="Z21514">
    <property type="protein sequence ID" value="CAA79726.1"/>
    <property type="molecule type" value="Genomic_DNA"/>
</dbReference>
<dbReference type="PIR" id="A40670">
    <property type="entry name" value="A40670"/>
</dbReference>
<dbReference type="RefSeq" id="NP_446074.1">
    <property type="nucleotide sequence ID" value="NM_053622.1"/>
</dbReference>
<dbReference type="PDB" id="4YI0">
    <property type="method" value="X-ray"/>
    <property type="resolution" value="1.81 A"/>
    <property type="chains" value="A=291-320"/>
</dbReference>
<dbReference type="PDBsum" id="4YI0"/>
<dbReference type="SMR" id="P52591"/>
<dbReference type="CORUM" id="P52591"/>
<dbReference type="FunCoup" id="P52591">
    <property type="interactions" value="2959"/>
</dbReference>
<dbReference type="STRING" id="10116.ENSRNOP00000001968"/>
<dbReference type="GlyGen" id="P52591">
    <property type="glycosylation" value="6 sites"/>
</dbReference>
<dbReference type="iPTMnet" id="P52591"/>
<dbReference type="PhosphoSitePlus" id="P52591"/>
<dbReference type="PaxDb" id="10116-ENSRNOP00000001968"/>
<dbReference type="GeneID" id="113975"/>
<dbReference type="KEGG" id="rno:113975"/>
<dbReference type="UCSC" id="RGD:620680">
    <property type="organism name" value="rat"/>
</dbReference>
<dbReference type="AGR" id="RGD:620680"/>
<dbReference type="CTD" id="9883"/>
<dbReference type="RGD" id="620680">
    <property type="gene designation" value="Pom121"/>
</dbReference>
<dbReference type="eggNOG" id="ENOG502R5GW">
    <property type="taxonomic scope" value="Eukaryota"/>
</dbReference>
<dbReference type="InParanoid" id="P52591"/>
<dbReference type="PhylomeDB" id="P52591"/>
<dbReference type="Reactome" id="R-RNO-159227">
    <property type="pathway name" value="Transport of the SLBP independent Mature mRNA"/>
</dbReference>
<dbReference type="Reactome" id="R-RNO-159230">
    <property type="pathway name" value="Transport of the SLBP Dependant Mature mRNA"/>
</dbReference>
<dbReference type="Reactome" id="R-RNO-159231">
    <property type="pathway name" value="Transport of Mature mRNA Derived from an Intronless Transcript"/>
</dbReference>
<dbReference type="Reactome" id="R-RNO-159236">
    <property type="pathway name" value="Transport of Mature mRNA derived from an Intron-Containing Transcript"/>
</dbReference>
<dbReference type="Reactome" id="R-RNO-170822">
    <property type="pathway name" value="Regulation of Glucokinase by Glucokinase Regulatory Protein"/>
</dbReference>
<dbReference type="Reactome" id="R-RNO-191859">
    <property type="pathway name" value="snRNP Assembly"/>
</dbReference>
<dbReference type="Reactome" id="R-RNO-3108214">
    <property type="pathway name" value="SUMOylation of DNA damage response and repair proteins"/>
</dbReference>
<dbReference type="Reactome" id="R-RNO-3232142">
    <property type="pathway name" value="SUMOylation of ubiquitinylation proteins"/>
</dbReference>
<dbReference type="Reactome" id="R-RNO-3301854">
    <property type="pathway name" value="Nuclear Pore Complex (NPC) Disassembly"/>
</dbReference>
<dbReference type="Reactome" id="R-RNO-3371453">
    <property type="pathway name" value="Regulation of HSF1-mediated heat shock response"/>
</dbReference>
<dbReference type="Reactome" id="R-RNO-4085377">
    <property type="pathway name" value="SUMOylation of SUMOylation proteins"/>
</dbReference>
<dbReference type="Reactome" id="R-RNO-4551638">
    <property type="pathway name" value="SUMOylation of chromatin organization proteins"/>
</dbReference>
<dbReference type="Reactome" id="R-RNO-4570464">
    <property type="pathway name" value="SUMOylation of RNA binding proteins"/>
</dbReference>
<dbReference type="Reactome" id="R-RNO-4615885">
    <property type="pathway name" value="SUMOylation of DNA replication proteins"/>
</dbReference>
<dbReference type="Reactome" id="R-RNO-5578749">
    <property type="pathway name" value="Transcriptional regulation by small RNAs"/>
</dbReference>
<dbReference type="Reactome" id="R-RNO-9615933">
    <property type="pathway name" value="Postmitotic nuclear pore complex (NPC) reformation"/>
</dbReference>
<dbReference type="PRO" id="PR:P52591"/>
<dbReference type="Proteomes" id="UP000002494">
    <property type="component" value="Unplaced"/>
</dbReference>
<dbReference type="GO" id="GO:0005789">
    <property type="term" value="C:endoplasmic reticulum membrane"/>
    <property type="evidence" value="ECO:0007669"/>
    <property type="project" value="UniProtKB-SubCell"/>
</dbReference>
<dbReference type="GO" id="GO:0005635">
    <property type="term" value="C:nuclear envelope"/>
    <property type="evidence" value="ECO:0000266"/>
    <property type="project" value="RGD"/>
</dbReference>
<dbReference type="GO" id="GO:0031965">
    <property type="term" value="C:nuclear membrane"/>
    <property type="evidence" value="ECO:0007669"/>
    <property type="project" value="UniProtKB-SubCell"/>
</dbReference>
<dbReference type="GO" id="GO:0005643">
    <property type="term" value="C:nuclear pore"/>
    <property type="evidence" value="ECO:0000314"/>
    <property type="project" value="RGD"/>
</dbReference>
<dbReference type="GO" id="GO:0008139">
    <property type="term" value="F:nuclear localization sequence binding"/>
    <property type="evidence" value="ECO:0000318"/>
    <property type="project" value="GO_Central"/>
</dbReference>
<dbReference type="GO" id="GO:0017056">
    <property type="term" value="F:structural constituent of nuclear pore"/>
    <property type="evidence" value="ECO:0000314"/>
    <property type="project" value="RGD"/>
</dbReference>
<dbReference type="GO" id="GO:0051028">
    <property type="term" value="P:mRNA transport"/>
    <property type="evidence" value="ECO:0007669"/>
    <property type="project" value="UniProtKB-KW"/>
</dbReference>
<dbReference type="GO" id="GO:0006999">
    <property type="term" value="P:nuclear pore organization"/>
    <property type="evidence" value="ECO:0000314"/>
    <property type="project" value="RGD"/>
</dbReference>
<dbReference type="GO" id="GO:0006606">
    <property type="term" value="P:protein import into nucleus"/>
    <property type="evidence" value="ECO:0000318"/>
    <property type="project" value="GO_Central"/>
</dbReference>
<dbReference type="GO" id="GO:0006405">
    <property type="term" value="P:RNA export from nucleus"/>
    <property type="evidence" value="ECO:0000318"/>
    <property type="project" value="GO_Central"/>
</dbReference>
<dbReference type="InterPro" id="IPR026054">
    <property type="entry name" value="Nucleoporin"/>
</dbReference>
<dbReference type="PANTHER" id="PTHR23193:SF5">
    <property type="entry name" value="NUCLEAR ENVELOPE PORE MEMBRANE PROTEIN POM 121C-RELATED"/>
    <property type="match status" value="1"/>
</dbReference>
<dbReference type="PANTHER" id="PTHR23193">
    <property type="entry name" value="NUCLEAR PORE COMPLEX PROTEIN NUP"/>
    <property type="match status" value="1"/>
</dbReference>
<dbReference type="Pfam" id="PF15229">
    <property type="entry name" value="POM121"/>
    <property type="match status" value="1"/>
</dbReference>
<keyword id="KW-0002">3D-structure</keyword>
<keyword id="KW-0903">Direct protein sequencing</keyword>
<keyword id="KW-0256">Endoplasmic reticulum</keyword>
<keyword id="KW-0472">Membrane</keyword>
<keyword id="KW-0509">mRNA transport</keyword>
<keyword id="KW-0906">Nuclear pore complex</keyword>
<keyword id="KW-0539">Nucleus</keyword>
<keyword id="KW-0597">Phosphoprotein</keyword>
<keyword id="KW-0653">Protein transport</keyword>
<keyword id="KW-1185">Reference proteome</keyword>
<keyword id="KW-0677">Repeat</keyword>
<keyword id="KW-0811">Translocation</keyword>
<keyword id="KW-0812">Transmembrane</keyword>
<keyword id="KW-1133">Transmembrane helix</keyword>
<keyword id="KW-0813">Transport</keyword>
<evidence type="ECO:0000250" key="1">
    <source>
        <dbReference type="UniProtKB" id="A8CG34"/>
    </source>
</evidence>
<evidence type="ECO:0000250" key="2">
    <source>
        <dbReference type="UniProtKB" id="Q8K3Z9"/>
    </source>
</evidence>
<evidence type="ECO:0000250" key="3">
    <source>
        <dbReference type="UniProtKB" id="Q96HA1"/>
    </source>
</evidence>
<evidence type="ECO:0000255" key="4"/>
<evidence type="ECO:0000256" key="5">
    <source>
        <dbReference type="SAM" id="MobiDB-lite"/>
    </source>
</evidence>
<evidence type="ECO:0000269" key="6">
    <source>
    </source>
</evidence>
<evidence type="ECO:0000269" key="7">
    <source>
    </source>
</evidence>
<evidence type="ECO:0000305" key="8"/>
<evidence type="ECO:0007744" key="9">
    <source>
    </source>
</evidence>
<reference key="1">
    <citation type="journal article" date="1993" name="J. Cell Biol.">
        <title>An integral membrane protein of the pore membrane domain of the nuclear envelope contains a nucleoporin-like region.</title>
        <authorList>
            <person name="Hallberg E."/>
            <person name="Wozniak R.W."/>
            <person name="Blobel G."/>
        </authorList>
    </citation>
    <scope>NUCLEOTIDE SEQUENCE [GENOMIC DNA / MRNA]</scope>
    <scope>PARTIAL PROTEIN SEQUENCE</scope>
    <source>
        <strain>Sprague-Dawley</strain>
        <tissue>Liver</tissue>
    </source>
</reference>
<reference key="2">
    <citation type="submission" date="2007-09" db="UniProtKB">
        <authorList>
            <person name="Lubec G."/>
            <person name="Kang S.U."/>
            <person name="Lubec S."/>
        </authorList>
    </citation>
    <scope>PROTEIN SEQUENCE OF 250-256; 365-384 AND 578-603</scope>
    <scope>IDENTIFICATION BY MASS SPECTROMETRY</scope>
    <source>
        <strain>Sprague-Dawley</strain>
        <tissue>Brain</tissue>
    </source>
</reference>
<reference key="3">
    <citation type="journal article" date="2001" name="J. Cell Biol.">
        <title>Nuclear pore complexes form immobile networks and have a very low turnover in live mammalian cells.</title>
        <authorList>
            <person name="Daigle N."/>
            <person name="Beaudouin J."/>
            <person name="Hartnell L."/>
            <person name="Imreh G."/>
            <person name="Hallberg E."/>
            <person name="Lippincott-Schwartz J."/>
            <person name="Ellenberg J."/>
        </authorList>
    </citation>
    <scope>SUBCELLULAR LOCATION</scope>
</reference>
<reference key="4">
    <citation type="journal article" date="2004" name="Exp. Cell Res.">
        <title>Correlation between nucleocytoplasmic transport and caspase-3-dependent dismantling of nuclear pores during apoptosis.</title>
        <authorList>
            <person name="Kihlmark M."/>
            <person name="Rustum C."/>
            <person name="Eriksson C."/>
            <person name="Beckman M."/>
            <person name="Iverfeldt K."/>
            <person name="Hallberg E."/>
        </authorList>
    </citation>
    <scope>MUTAGENESIS OF ASP-531</scope>
</reference>
<reference key="5">
    <citation type="journal article" date="2012" name="Nat. Commun.">
        <title>Quantitative maps of protein phosphorylation sites across 14 different rat organs and tissues.</title>
        <authorList>
            <person name="Lundby A."/>
            <person name="Secher A."/>
            <person name="Lage K."/>
            <person name="Nordsborg N.B."/>
            <person name="Dmytriyev A."/>
            <person name="Lundby C."/>
            <person name="Olsen J.V."/>
        </authorList>
    </citation>
    <scope>PHOSPHORYLATION [LARGE SCALE ANALYSIS] AT SER-355</scope>
    <scope>IDENTIFICATION BY MASS SPECTROMETRY [LARGE SCALE ANALYSIS]</scope>
</reference>
<feature type="chain" id="PRO_0000204908" description="Nuclear envelope pore membrane protein POM 121">
    <location>
        <begin position="1"/>
        <end position="1199"/>
    </location>
</feature>
<feature type="transmembrane region" description="Helical" evidence="4">
    <location>
        <begin position="57"/>
        <end position="77"/>
    </location>
</feature>
<feature type="region of interest" description="Cisternal side" evidence="4">
    <location>
        <begin position="1"/>
        <end position="56"/>
    </location>
</feature>
<feature type="region of interest" description="Disordered" evidence="5">
    <location>
        <begin position="1"/>
        <end position="29"/>
    </location>
</feature>
<feature type="region of interest" description="Pore side" evidence="4">
    <location>
        <begin position="76"/>
        <end position="1199"/>
    </location>
</feature>
<feature type="region of interest" description="Disordered" evidence="5">
    <location>
        <begin position="82"/>
        <end position="197"/>
    </location>
</feature>
<feature type="region of interest" description="Disordered" evidence="5">
    <location>
        <begin position="294"/>
        <end position="328"/>
    </location>
</feature>
<feature type="region of interest" description="Disordered" evidence="5">
    <location>
        <begin position="344"/>
        <end position="509"/>
    </location>
</feature>
<feature type="region of interest" description="Disordered" evidence="5">
    <location>
        <begin position="528"/>
        <end position="631"/>
    </location>
</feature>
<feature type="region of interest" description="Disordered" evidence="5">
    <location>
        <begin position="701"/>
        <end position="734"/>
    </location>
</feature>
<feature type="region of interest" description="Disordered" evidence="5">
    <location>
        <begin position="1061"/>
        <end position="1151"/>
    </location>
</feature>
<feature type="region of interest" description="Disordered" evidence="5">
    <location>
        <begin position="1163"/>
        <end position="1199"/>
    </location>
</feature>
<feature type="compositionally biased region" description="Basic and acidic residues" evidence="5">
    <location>
        <begin position="10"/>
        <end position="25"/>
    </location>
</feature>
<feature type="compositionally biased region" description="Basic and acidic residues" evidence="5">
    <location>
        <begin position="298"/>
        <end position="312"/>
    </location>
</feature>
<feature type="compositionally biased region" description="Low complexity" evidence="5">
    <location>
        <begin position="365"/>
        <end position="376"/>
    </location>
</feature>
<feature type="compositionally biased region" description="Polar residues" evidence="5">
    <location>
        <begin position="379"/>
        <end position="397"/>
    </location>
</feature>
<feature type="compositionally biased region" description="Low complexity" evidence="5">
    <location>
        <begin position="404"/>
        <end position="419"/>
    </location>
</feature>
<feature type="compositionally biased region" description="Basic and acidic residues" evidence="5">
    <location>
        <begin position="424"/>
        <end position="435"/>
    </location>
</feature>
<feature type="compositionally biased region" description="Basic and acidic residues" evidence="5">
    <location>
        <begin position="446"/>
        <end position="456"/>
    </location>
</feature>
<feature type="compositionally biased region" description="Polar residues" evidence="5">
    <location>
        <begin position="461"/>
        <end position="477"/>
    </location>
</feature>
<feature type="compositionally biased region" description="Low complexity" evidence="5">
    <location>
        <begin position="533"/>
        <end position="547"/>
    </location>
</feature>
<feature type="compositionally biased region" description="Low complexity" evidence="5">
    <location>
        <begin position="557"/>
        <end position="574"/>
    </location>
</feature>
<feature type="compositionally biased region" description="Low complexity" evidence="5">
    <location>
        <begin position="581"/>
        <end position="598"/>
    </location>
</feature>
<feature type="compositionally biased region" description="Polar residues" evidence="5">
    <location>
        <begin position="619"/>
        <end position="631"/>
    </location>
</feature>
<feature type="compositionally biased region" description="Low complexity" evidence="5">
    <location>
        <begin position="715"/>
        <end position="734"/>
    </location>
</feature>
<feature type="compositionally biased region" description="Low complexity" evidence="5">
    <location>
        <begin position="1064"/>
        <end position="1098"/>
    </location>
</feature>
<feature type="compositionally biased region" description="Polar residues" evidence="5">
    <location>
        <begin position="1099"/>
        <end position="1120"/>
    </location>
</feature>
<feature type="compositionally biased region" description="Basic residues" evidence="5">
    <location>
        <begin position="1189"/>
        <end position="1199"/>
    </location>
</feature>
<feature type="site" description="Cleavage; by caspase-3">
    <location>
        <begin position="531"/>
        <end position="532"/>
    </location>
</feature>
<feature type="modified residue" description="Phosphoserine" evidence="1">
    <location>
        <position position="83"/>
    </location>
</feature>
<feature type="modified residue" description="Phosphoserine" evidence="2">
    <location>
        <position position="244"/>
    </location>
</feature>
<feature type="modified residue" description="Phosphoserine" evidence="2">
    <location>
        <position position="319"/>
    </location>
</feature>
<feature type="modified residue" description="Phosphoserine" evidence="2">
    <location>
        <position position="322"/>
    </location>
</feature>
<feature type="modified residue" description="Phosphoserine" evidence="2">
    <location>
        <position position="325"/>
    </location>
</feature>
<feature type="modified residue" description="Phosphoserine" evidence="3">
    <location>
        <position position="345"/>
    </location>
</feature>
<feature type="modified residue" description="Phosphoserine" evidence="9">
    <location>
        <position position="355"/>
    </location>
</feature>
<feature type="modified residue" description="Phosphoserine" evidence="1">
    <location>
        <position position="367"/>
    </location>
</feature>
<feature type="modified residue" description="Phosphoserine" evidence="2">
    <location>
        <position position="370"/>
    </location>
</feature>
<feature type="modified residue" description="Phosphoserine" evidence="2">
    <location>
        <position position="408"/>
    </location>
</feature>
<feature type="modified residue" description="Phosphoserine" evidence="2">
    <location>
        <position position="409"/>
    </location>
</feature>
<feature type="modified residue" description="Phosphoserine" evidence="2">
    <location>
        <position position="412"/>
    </location>
</feature>
<feature type="modified residue" description="Phosphoserine" evidence="2">
    <location>
        <position position="413"/>
    </location>
</feature>
<feature type="modified residue" description="Phosphoserine" evidence="2">
    <location>
        <position position="416"/>
    </location>
</feature>
<feature type="modified residue" description="Phosphoserine" evidence="2">
    <location>
        <position position="417"/>
    </location>
</feature>
<feature type="mutagenesis site" description="Abolishes cleavage." evidence="7">
    <original>D</original>
    <variation>A</variation>
    <location>
        <position position="531"/>
    </location>
</feature>
<name>PO121_RAT</name>
<proteinExistence type="evidence at protein level"/>